<reference key="1">
    <citation type="journal article" date="2002" name="Nature">
        <title>Comparison of the genomes of two Xanthomonas pathogens with differing host specificities.</title>
        <authorList>
            <person name="da Silva A.C.R."/>
            <person name="Ferro J.A."/>
            <person name="Reinach F.C."/>
            <person name="Farah C.S."/>
            <person name="Furlan L.R."/>
            <person name="Quaggio R.B."/>
            <person name="Monteiro-Vitorello C.B."/>
            <person name="Van Sluys M.A."/>
            <person name="Almeida N.F. Jr."/>
            <person name="Alves L.M.C."/>
            <person name="do Amaral A.M."/>
            <person name="Bertolini M.C."/>
            <person name="Camargo L.E.A."/>
            <person name="Camarotte G."/>
            <person name="Cannavan F."/>
            <person name="Cardozo J."/>
            <person name="Chambergo F."/>
            <person name="Ciapina L.P."/>
            <person name="Cicarelli R.M.B."/>
            <person name="Coutinho L.L."/>
            <person name="Cursino-Santos J.R."/>
            <person name="El-Dorry H."/>
            <person name="Faria J.B."/>
            <person name="Ferreira A.J.S."/>
            <person name="Ferreira R.C.C."/>
            <person name="Ferro M.I.T."/>
            <person name="Formighieri E.F."/>
            <person name="Franco M.C."/>
            <person name="Greggio C.C."/>
            <person name="Gruber A."/>
            <person name="Katsuyama A.M."/>
            <person name="Kishi L.T."/>
            <person name="Leite R.P."/>
            <person name="Lemos E.G.M."/>
            <person name="Lemos M.V.F."/>
            <person name="Locali E.C."/>
            <person name="Machado M.A."/>
            <person name="Madeira A.M.B.N."/>
            <person name="Martinez-Rossi N.M."/>
            <person name="Martins E.C."/>
            <person name="Meidanis J."/>
            <person name="Menck C.F.M."/>
            <person name="Miyaki C.Y."/>
            <person name="Moon D.H."/>
            <person name="Moreira L.M."/>
            <person name="Novo M.T.M."/>
            <person name="Okura V.K."/>
            <person name="Oliveira M.C."/>
            <person name="Oliveira V.R."/>
            <person name="Pereira H.A."/>
            <person name="Rossi A."/>
            <person name="Sena J.A.D."/>
            <person name="Silva C."/>
            <person name="de Souza R.F."/>
            <person name="Spinola L.A.F."/>
            <person name="Takita M.A."/>
            <person name="Tamura R.E."/>
            <person name="Teixeira E.C."/>
            <person name="Tezza R.I.D."/>
            <person name="Trindade dos Santos M."/>
            <person name="Truffi D."/>
            <person name="Tsai S.M."/>
            <person name="White F.F."/>
            <person name="Setubal J.C."/>
            <person name="Kitajima J.P."/>
        </authorList>
    </citation>
    <scope>NUCLEOTIDE SEQUENCE [LARGE SCALE GENOMIC DNA]</scope>
    <source>
        <strain>306</strain>
    </source>
</reference>
<comment type="catalytic activity">
    <reaction evidence="1">
        <text>2-(N(omega)-L-arginino)succinate = fumarate + L-arginine</text>
        <dbReference type="Rhea" id="RHEA:24020"/>
        <dbReference type="ChEBI" id="CHEBI:29806"/>
        <dbReference type="ChEBI" id="CHEBI:32682"/>
        <dbReference type="ChEBI" id="CHEBI:57472"/>
        <dbReference type="EC" id="4.3.2.1"/>
    </reaction>
</comment>
<comment type="pathway">
    <text evidence="1">Amino-acid biosynthesis; L-arginine biosynthesis; L-arginine from L-ornithine and carbamoyl phosphate: step 3/3.</text>
</comment>
<comment type="subcellular location">
    <subcellularLocation>
        <location evidence="1">Cytoplasm</location>
    </subcellularLocation>
</comment>
<comment type="similarity">
    <text evidence="1">Belongs to the lyase 1 family. Argininosuccinate lyase subfamily.</text>
</comment>
<comment type="sequence caution" evidence="2">
    <conflict type="erroneous initiation">
        <sequence resource="EMBL-CDS" id="AAM37197"/>
    </conflict>
</comment>
<keyword id="KW-0028">Amino-acid biosynthesis</keyword>
<keyword id="KW-0055">Arginine biosynthesis</keyword>
<keyword id="KW-0963">Cytoplasm</keyword>
<keyword id="KW-0456">Lyase</keyword>
<dbReference type="EC" id="4.3.2.1" evidence="1"/>
<dbReference type="EMBL" id="AE008923">
    <property type="protein sequence ID" value="AAM37197.1"/>
    <property type="status" value="ALT_INIT"/>
    <property type="molecule type" value="Genomic_DNA"/>
</dbReference>
<dbReference type="RefSeq" id="WP_003486963.1">
    <property type="nucleotide sequence ID" value="NC_003919.1"/>
</dbReference>
<dbReference type="SMR" id="Q8PK32"/>
<dbReference type="KEGG" id="xac:XAC2345"/>
<dbReference type="eggNOG" id="COG0165">
    <property type="taxonomic scope" value="Bacteria"/>
</dbReference>
<dbReference type="HOGENOM" id="CLU_027272_2_0_6"/>
<dbReference type="UniPathway" id="UPA00068">
    <property type="reaction ID" value="UER00114"/>
</dbReference>
<dbReference type="Proteomes" id="UP000000576">
    <property type="component" value="Chromosome"/>
</dbReference>
<dbReference type="GO" id="GO:0005829">
    <property type="term" value="C:cytosol"/>
    <property type="evidence" value="ECO:0007669"/>
    <property type="project" value="TreeGrafter"/>
</dbReference>
<dbReference type="GO" id="GO:0004056">
    <property type="term" value="F:argininosuccinate lyase activity"/>
    <property type="evidence" value="ECO:0007669"/>
    <property type="project" value="UniProtKB-UniRule"/>
</dbReference>
<dbReference type="GO" id="GO:0042450">
    <property type="term" value="P:arginine biosynthetic process via ornithine"/>
    <property type="evidence" value="ECO:0007669"/>
    <property type="project" value="InterPro"/>
</dbReference>
<dbReference type="GO" id="GO:0006526">
    <property type="term" value="P:L-arginine biosynthetic process"/>
    <property type="evidence" value="ECO:0007669"/>
    <property type="project" value="UniProtKB-UniRule"/>
</dbReference>
<dbReference type="Gene3D" id="1.10.40.30">
    <property type="entry name" value="Fumarase/aspartase (C-terminal domain)"/>
    <property type="match status" value="1"/>
</dbReference>
<dbReference type="Gene3D" id="1.20.200.10">
    <property type="entry name" value="Fumarase/aspartase (Central domain)"/>
    <property type="match status" value="1"/>
</dbReference>
<dbReference type="Gene3D" id="1.10.275.10">
    <property type="entry name" value="Fumarase/aspartase (N-terminal domain)"/>
    <property type="match status" value="1"/>
</dbReference>
<dbReference type="HAMAP" id="MF_00006">
    <property type="entry name" value="Arg_succ_lyase"/>
    <property type="match status" value="1"/>
</dbReference>
<dbReference type="InterPro" id="IPR009049">
    <property type="entry name" value="Argininosuccinate_lyase"/>
</dbReference>
<dbReference type="InterPro" id="IPR024083">
    <property type="entry name" value="Fumarase/histidase_N"/>
</dbReference>
<dbReference type="InterPro" id="IPR020557">
    <property type="entry name" value="Fumarate_lyase_CS"/>
</dbReference>
<dbReference type="InterPro" id="IPR000362">
    <property type="entry name" value="Fumarate_lyase_fam"/>
</dbReference>
<dbReference type="InterPro" id="IPR022761">
    <property type="entry name" value="Fumarate_lyase_N"/>
</dbReference>
<dbReference type="InterPro" id="IPR008948">
    <property type="entry name" value="L-Aspartase-like"/>
</dbReference>
<dbReference type="PANTHER" id="PTHR43814">
    <property type="entry name" value="ARGININOSUCCINATE LYASE"/>
    <property type="match status" value="1"/>
</dbReference>
<dbReference type="PANTHER" id="PTHR43814:SF1">
    <property type="entry name" value="ARGININOSUCCINATE LYASE"/>
    <property type="match status" value="1"/>
</dbReference>
<dbReference type="Pfam" id="PF00206">
    <property type="entry name" value="Lyase_1"/>
    <property type="match status" value="1"/>
</dbReference>
<dbReference type="PRINTS" id="PR00145">
    <property type="entry name" value="ARGSUCLYASE"/>
</dbReference>
<dbReference type="PRINTS" id="PR00149">
    <property type="entry name" value="FUMRATELYASE"/>
</dbReference>
<dbReference type="SUPFAM" id="SSF48557">
    <property type="entry name" value="L-aspartase-like"/>
    <property type="match status" value="1"/>
</dbReference>
<dbReference type="PROSITE" id="PS00163">
    <property type="entry name" value="FUMARATE_LYASES"/>
    <property type="match status" value="1"/>
</dbReference>
<accession>Q8PK32</accession>
<name>ARLY_XANAC</name>
<organism>
    <name type="scientific">Xanthomonas axonopodis pv. citri (strain 306)</name>
    <dbReference type="NCBI Taxonomy" id="190486"/>
    <lineage>
        <taxon>Bacteria</taxon>
        <taxon>Pseudomonadati</taxon>
        <taxon>Pseudomonadota</taxon>
        <taxon>Gammaproteobacteria</taxon>
        <taxon>Lysobacterales</taxon>
        <taxon>Lysobacteraceae</taxon>
        <taxon>Xanthomonas</taxon>
    </lineage>
</organism>
<protein>
    <recommendedName>
        <fullName evidence="1">Argininosuccinate lyase</fullName>
        <shortName evidence="1">ASAL</shortName>
        <ecNumber evidence="1">4.3.2.1</ecNumber>
    </recommendedName>
    <alternativeName>
        <fullName evidence="1">Arginosuccinase</fullName>
    </alternativeName>
</protein>
<proteinExistence type="inferred from homology"/>
<evidence type="ECO:0000255" key="1">
    <source>
        <dbReference type="HAMAP-Rule" id="MF_00006"/>
    </source>
</evidence>
<evidence type="ECO:0000305" key="2"/>
<sequence length="432" mass="46393">MTNLLWQKPGVAVDAKIQSFLAGDDVILDREFFLYDIAASKAHAQGLQHIGILSLQELGGLSEQLDLLAADFRSGAFVLDAQYEDCHSAIEARLTERLGDAGRKIHTGRSRNDQILVATRLWLKDKLQRVATLSAEIAEVALERAQAEAELPVPGYTHIQRAVVSSAGMWWAGWAEAFIDNAVRAGDTVHLVDSNPLGTAAGYGVNLPLDRAHTTAELGFARLLVSPIYAQLSRGKYELAALEALGSATLDLRRIAWDLSLFTSGEFAFVALPAQYTTGSSIMPNKRNPDVIELMRATHASVAAARTEIEQLLSLPSGYHRDLQSSKGAIVHGFGRGLAALELLPALLANLEWRPDKLRAAIDSGMYATDVAVEAAVAGVPFREAYKAAAQASETAGQGRTPEGSLAARVSPGAAADLQLDVLQARWQALRA</sequence>
<feature type="chain" id="PRO_0000137851" description="Argininosuccinate lyase">
    <location>
        <begin position="1"/>
        <end position="432"/>
    </location>
</feature>
<gene>
    <name evidence="1" type="primary">argH</name>
    <name type="ordered locus">XAC2345</name>
</gene>